<reference key="1">
    <citation type="journal article" date="2019" name="Mar. Drugs">
        <title>Transcriptomic-proteomic correlation in the predation-evoked venom of the cone snail, Conus imperialis.</title>
        <authorList>
            <person name="Jin A.H."/>
            <person name="Dutertre S."/>
            <person name="Dutt M."/>
            <person name="Lavergne V."/>
            <person name="Jones A."/>
            <person name="Lewis R.J."/>
            <person name="Alewood P.F."/>
        </authorList>
    </citation>
    <scope>NUCLEOTIDE SEQUENCE [MRNA]</scope>
    <scope>IDENTIFICATION BY MASS SPECTROMETRY</scope>
    <scope>SUBCELLULAR LOCATION</scope>
    <source>
        <tissue>Venom</tissue>
        <tissue>Venom duct</tissue>
    </source>
</reference>
<sequence>MRLTTMHSVILMLLLVFAFDNVDGDEPGQTARDVDNRNFMSILRSEGKPVHFLRAIKKRDCTGQACTTGDNCPSECVCNEHHFCTGKCCYFLHA</sequence>
<dbReference type="EMBL" id="KT377420">
    <property type="protein sequence ID" value="AME17684.1"/>
    <property type="molecule type" value="mRNA"/>
</dbReference>
<dbReference type="SMR" id="A0A125S9G0"/>
<dbReference type="GO" id="GO:0005576">
    <property type="term" value="C:extracellular region"/>
    <property type="evidence" value="ECO:0007669"/>
    <property type="project" value="UniProtKB-SubCell"/>
</dbReference>
<dbReference type="GO" id="GO:0090729">
    <property type="term" value="F:toxin activity"/>
    <property type="evidence" value="ECO:0007669"/>
    <property type="project" value="UniProtKB-KW"/>
</dbReference>
<protein>
    <recommendedName>
        <fullName evidence="4">Conotoxin Im026</fullName>
    </recommendedName>
    <alternativeName>
        <fullName evidence="3 6">Conopeptide im026</fullName>
    </alternativeName>
</protein>
<proteinExistence type="evidence at protein level"/>
<comment type="function">
    <text evidence="4">Probable neurotoxin.</text>
</comment>
<comment type="subcellular location">
    <subcellularLocation>
        <location evidence="2">Secreted</location>
    </subcellularLocation>
</comment>
<comment type="tissue specificity">
    <text evidence="5">Expressed by the venom duct.</text>
</comment>
<comment type="domain">
    <text evidence="4">The cysteine framework is C-C-C-C-C-C-CC.</text>
</comment>
<comment type="PTM">
    <text evidence="4">Contains 4 disulfide bonds.</text>
</comment>
<name>CXQ_CONIM</name>
<keyword id="KW-0165">Cleavage on pair of basic residues</keyword>
<keyword id="KW-1015">Disulfide bond</keyword>
<keyword id="KW-0528">Neurotoxin</keyword>
<keyword id="KW-0964">Secreted</keyword>
<keyword id="KW-0732">Signal</keyword>
<keyword id="KW-0800">Toxin</keyword>
<feature type="signal peptide" evidence="1">
    <location>
        <begin position="1"/>
        <end position="24"/>
    </location>
</feature>
<feature type="propeptide" id="PRO_0000450994" evidence="4">
    <location>
        <begin position="25"/>
        <end position="59"/>
    </location>
</feature>
<feature type="chain" id="PRO_5007179758" description="Conotoxin Im026" evidence="4">
    <location>
        <begin position="60"/>
        <end position="94"/>
    </location>
</feature>
<evidence type="ECO:0000255" key="1"/>
<evidence type="ECO:0000269" key="2">
    <source>
    </source>
</evidence>
<evidence type="ECO:0000303" key="3">
    <source>
    </source>
</evidence>
<evidence type="ECO:0000305" key="4"/>
<evidence type="ECO:0000305" key="5">
    <source>
    </source>
</evidence>
<evidence type="ECO:0000312" key="6">
    <source>
        <dbReference type="EMBL" id="AME17684.1"/>
    </source>
</evidence>
<accession>A0A125S9G0</accession>
<organism>
    <name type="scientific">Conus imperialis</name>
    <name type="common">Imperial cone</name>
    <dbReference type="NCBI Taxonomy" id="35631"/>
    <lineage>
        <taxon>Eukaryota</taxon>
        <taxon>Metazoa</taxon>
        <taxon>Spiralia</taxon>
        <taxon>Lophotrochozoa</taxon>
        <taxon>Mollusca</taxon>
        <taxon>Gastropoda</taxon>
        <taxon>Caenogastropoda</taxon>
        <taxon>Neogastropoda</taxon>
        <taxon>Conoidea</taxon>
        <taxon>Conidae</taxon>
        <taxon>Conus</taxon>
        <taxon>Stephanoconus</taxon>
    </lineage>
</organism>